<organism>
    <name type="scientific">Staphylococcus saprophyticus subsp. saprophyticus (strain ATCC 15305 / DSM 20229 / NCIMB 8711 / NCTC 7292 / S-41)</name>
    <dbReference type="NCBI Taxonomy" id="342451"/>
    <lineage>
        <taxon>Bacteria</taxon>
        <taxon>Bacillati</taxon>
        <taxon>Bacillota</taxon>
        <taxon>Bacilli</taxon>
        <taxon>Bacillales</taxon>
        <taxon>Staphylococcaceae</taxon>
        <taxon>Staphylococcus</taxon>
    </lineage>
</organism>
<comment type="function">
    <text evidence="1">Catalyzes the incorporation of amino acid(s) into the interchain peptide bridge of peptidoglycan, using aminoacyl-tRNA as amino acid donor.</text>
</comment>
<comment type="catalytic activity">
    <reaction>
        <text>beta-D-GlcNAc-(1-&gt;4)-Mur2Ac(oyl-L-Ala-D-isoglutaminyl-L-Lys-D-Ala-D-Ala)-di-trans,octa-cis-undecaprenyl diphosphate + glycyl-tRNA(Gly) = beta-D-GlcNAc-(1-&gt;4)-Mur2Ac(oyl-L-Ala-D-isoglutaminyl-L-Lys-(N(6)-Gly)-D-Ala-D-Ala)-di-trans,octa-cis-undecaprenyl diphosphate + tRNA(Gly) + H(+)</text>
        <dbReference type="Rhea" id="RHEA:30435"/>
        <dbReference type="Rhea" id="RHEA-COMP:9664"/>
        <dbReference type="Rhea" id="RHEA-COMP:9683"/>
        <dbReference type="ChEBI" id="CHEBI:15378"/>
        <dbReference type="ChEBI" id="CHEBI:62233"/>
        <dbReference type="ChEBI" id="CHEBI:62234"/>
        <dbReference type="ChEBI" id="CHEBI:78442"/>
        <dbReference type="ChEBI" id="CHEBI:78522"/>
        <dbReference type="EC" id="2.3.2.16"/>
    </reaction>
</comment>
<comment type="subcellular location">
    <subcellularLocation>
        <location evidence="2">Cytoplasm</location>
    </subcellularLocation>
</comment>
<comment type="similarity">
    <text evidence="2">Belongs to the FemABX family.</text>
</comment>
<name>FEMX_STAS1</name>
<reference key="1">
    <citation type="journal article" date="2005" name="Proc. Natl. Acad. Sci. U.S.A.">
        <title>Whole genome sequence of Staphylococcus saprophyticus reveals the pathogenesis of uncomplicated urinary tract infection.</title>
        <authorList>
            <person name="Kuroda M."/>
            <person name="Yamashita A."/>
            <person name="Hirakawa H."/>
            <person name="Kumano M."/>
            <person name="Morikawa K."/>
            <person name="Higashide M."/>
            <person name="Maruyama A."/>
            <person name="Inose Y."/>
            <person name="Matoba K."/>
            <person name="Toh H."/>
            <person name="Kuhara S."/>
            <person name="Hattori M."/>
            <person name="Ohta T."/>
        </authorList>
    </citation>
    <scope>NUCLEOTIDE SEQUENCE [LARGE SCALE GENOMIC DNA]</scope>
    <source>
        <strain>ATCC 15305 / DSM 20229 / NCIMB 8711 / NCTC 7292 / S-41</strain>
    </source>
</reference>
<protein>
    <recommendedName>
        <fullName>Lipid II:glycine glycyltransferase</fullName>
        <ecNumber>2.3.2.16</ecNumber>
    </recommendedName>
    <alternativeName>
        <fullName>Factor essential for expression of methicillin resistance X</fullName>
    </alternativeName>
</protein>
<dbReference type="EC" id="2.3.2.16"/>
<dbReference type="EMBL" id="AP008934">
    <property type="protein sequence ID" value="BAE17796.1"/>
    <property type="molecule type" value="Genomic_DNA"/>
</dbReference>
<dbReference type="RefSeq" id="WP_011302589.1">
    <property type="nucleotide sequence ID" value="NC_007350.1"/>
</dbReference>
<dbReference type="SMR" id="Q49ZI0"/>
<dbReference type="GeneID" id="3616047"/>
<dbReference type="KEGG" id="ssp:SSP0651"/>
<dbReference type="PATRIC" id="fig|342451.11.peg.653"/>
<dbReference type="eggNOG" id="COG2348">
    <property type="taxonomic scope" value="Bacteria"/>
</dbReference>
<dbReference type="HOGENOM" id="CLU_048411_0_1_9"/>
<dbReference type="OrthoDB" id="9785911at2"/>
<dbReference type="Proteomes" id="UP000006371">
    <property type="component" value="Chromosome"/>
</dbReference>
<dbReference type="GO" id="GO:0005737">
    <property type="term" value="C:cytoplasm"/>
    <property type="evidence" value="ECO:0007669"/>
    <property type="project" value="UniProtKB-SubCell"/>
</dbReference>
<dbReference type="GO" id="GO:0016755">
    <property type="term" value="F:aminoacyltransferase activity"/>
    <property type="evidence" value="ECO:0007669"/>
    <property type="project" value="InterPro"/>
</dbReference>
<dbReference type="GO" id="GO:0071555">
    <property type="term" value="P:cell wall organization"/>
    <property type="evidence" value="ECO:0007669"/>
    <property type="project" value="UniProtKB-KW"/>
</dbReference>
<dbReference type="GO" id="GO:0009252">
    <property type="term" value="P:peptidoglycan biosynthetic process"/>
    <property type="evidence" value="ECO:0007669"/>
    <property type="project" value="UniProtKB-KW"/>
</dbReference>
<dbReference type="GO" id="GO:0008360">
    <property type="term" value="P:regulation of cell shape"/>
    <property type="evidence" value="ECO:0007669"/>
    <property type="project" value="UniProtKB-KW"/>
</dbReference>
<dbReference type="Gene3D" id="1.20.58.90">
    <property type="match status" value="1"/>
</dbReference>
<dbReference type="Gene3D" id="3.40.630.30">
    <property type="match status" value="2"/>
</dbReference>
<dbReference type="InterPro" id="IPR016181">
    <property type="entry name" value="Acyl_CoA_acyltransferase"/>
</dbReference>
<dbReference type="InterPro" id="IPR003447">
    <property type="entry name" value="FEMABX"/>
</dbReference>
<dbReference type="InterPro" id="IPR050644">
    <property type="entry name" value="PG_Glycine_Bridge_Synth"/>
</dbReference>
<dbReference type="PANTHER" id="PTHR36174">
    <property type="entry name" value="LIPID II:GLYCINE GLYCYLTRANSFERASE"/>
    <property type="match status" value="1"/>
</dbReference>
<dbReference type="PANTHER" id="PTHR36174:SF1">
    <property type="entry name" value="LIPID II:GLYCINE GLYCYLTRANSFERASE"/>
    <property type="match status" value="1"/>
</dbReference>
<dbReference type="Pfam" id="PF02388">
    <property type="entry name" value="FemAB"/>
    <property type="match status" value="1"/>
</dbReference>
<dbReference type="SUPFAM" id="SSF55729">
    <property type="entry name" value="Acyl-CoA N-acyltransferases (Nat)"/>
    <property type="match status" value="2"/>
</dbReference>
<dbReference type="PROSITE" id="PS51191">
    <property type="entry name" value="FEMABX"/>
    <property type="match status" value="1"/>
</dbReference>
<keyword id="KW-0012">Acyltransferase</keyword>
<keyword id="KW-0133">Cell shape</keyword>
<keyword id="KW-0961">Cell wall biogenesis/degradation</keyword>
<keyword id="KW-0963">Cytoplasm</keyword>
<keyword id="KW-0573">Peptidoglycan synthesis</keyword>
<keyword id="KW-1185">Reference proteome</keyword>
<keyword id="KW-0808">Transferase</keyword>
<proteinExistence type="inferred from homology"/>
<feature type="chain" id="PRO_0000236179" description="Lipid II:glycine glycyltransferase">
    <location>
        <begin position="1"/>
        <end position="415"/>
    </location>
</feature>
<gene>
    <name type="primary">femX</name>
    <name type="synonym">fmhB</name>
    <name type="ordered locus">SSP0651</name>
</gene>
<sequence>MEKMNITDQAHDAFVKAHPQGDLLQLTQWAETKTLTGWYSRRIAVGEDDEIVGVAQLLFKKVPKLPYTLCYISRGFVTDYSNKLALETLLEAAMQIAKEEKAYAIKIDPDVEVDKGADALSNLRALGFKHKGFKEGLSKDYIQPRMTMITPIEKTDVALIQSFERRNRSKVRLALKRGTTVERSNREGLKTFANLMQITGERDGFLTRDISYFENIYDALHPDGDAELFLVKLEPKPVLEDLRQELHELEDEKAKLADKKQDKKTLNKINDADNKIAKTQELIDEMVTLESTHPEGIYLSGALLMFAGKKSYYLYGASSNEYRNFLPNHHMQFAMMQYAREHGATSYDFGGTDNNPDKDSDHYGLWTFKKVWGTYLSEKIGEFDYVLNAPLYQIIENIKPKLTKAKIKLSRKLKK</sequence>
<evidence type="ECO:0000250" key="1"/>
<evidence type="ECO:0000305" key="2"/>
<accession>Q49ZI0</accession>